<keyword id="KW-0007">Acetylation</keyword>
<keyword id="KW-0056">Arginine metabolism</keyword>
<keyword id="KW-0378">Hydrolase</keyword>
<keyword id="KW-0464">Manganese</keyword>
<keyword id="KW-0479">Metal-binding</keyword>
<keyword id="KW-0597">Phosphoprotein</keyword>
<keyword id="KW-1185">Reference proteome</keyword>
<feature type="chain" id="PRO_0000173711" description="Arginase">
    <location>
        <begin position="1"/>
        <end position="333"/>
    </location>
</feature>
<feature type="binding site" evidence="3">
    <location>
        <position position="123"/>
    </location>
    <ligand>
        <name>Mn(2+)</name>
        <dbReference type="ChEBI" id="CHEBI:29035"/>
        <label>1</label>
    </ligand>
</feature>
<feature type="binding site" evidence="3">
    <location>
        <position position="146"/>
    </location>
    <ligand>
        <name>Mn(2+)</name>
        <dbReference type="ChEBI" id="CHEBI:29035"/>
        <label>1</label>
    </ligand>
</feature>
<feature type="binding site" evidence="3">
    <location>
        <position position="146"/>
    </location>
    <ligand>
        <name>Mn(2+)</name>
        <dbReference type="ChEBI" id="CHEBI:29035"/>
        <label>2</label>
    </ligand>
</feature>
<feature type="binding site" evidence="2">
    <location>
        <begin position="148"/>
        <end position="152"/>
    </location>
    <ligand>
        <name>substrate</name>
    </ligand>
</feature>
<feature type="binding site" evidence="3">
    <location>
        <position position="148"/>
    </location>
    <ligand>
        <name>Mn(2+)</name>
        <dbReference type="ChEBI" id="CHEBI:29035"/>
        <label>2</label>
    </ligand>
</feature>
<feature type="binding site" evidence="3">
    <location>
        <position position="150"/>
    </location>
    <ligand>
        <name>Mn(2+)</name>
        <dbReference type="ChEBI" id="CHEBI:29035"/>
        <label>1</label>
    </ligand>
</feature>
<feature type="binding site" evidence="2">
    <location>
        <begin position="159"/>
        <end position="161"/>
    </location>
    <ligand>
        <name>substrate</name>
    </ligand>
</feature>
<feature type="binding site" evidence="2">
    <location>
        <position position="205"/>
    </location>
    <ligand>
        <name>substrate</name>
    </ligand>
</feature>
<feature type="binding site" evidence="3">
    <location>
        <position position="256"/>
    </location>
    <ligand>
        <name>Mn(2+)</name>
        <dbReference type="ChEBI" id="CHEBI:29035"/>
        <label>1</label>
    </ligand>
</feature>
<feature type="binding site" evidence="3">
    <location>
        <position position="256"/>
    </location>
    <ligand>
        <name>Mn(2+)</name>
        <dbReference type="ChEBI" id="CHEBI:29035"/>
        <label>2</label>
    </ligand>
</feature>
<feature type="binding site" evidence="3">
    <location>
        <position position="258"/>
    </location>
    <ligand>
        <name>Mn(2+)</name>
        <dbReference type="ChEBI" id="CHEBI:29035"/>
        <label>2</label>
    </ligand>
</feature>
<feature type="binding site" evidence="2">
    <location>
        <position position="270"/>
    </location>
    <ligand>
        <name>substrate</name>
    </ligand>
</feature>
<feature type="binding site" evidence="2">
    <location>
        <position position="301"/>
    </location>
    <ligand>
        <name>substrate</name>
    </ligand>
</feature>
<feature type="modified residue" description="N-acetylmethionine" evidence="7">
    <location>
        <position position="1"/>
    </location>
</feature>
<feature type="modified residue" description="Phosphoserine" evidence="6">
    <location>
        <position position="16"/>
    </location>
</feature>
<feature type="modified residue" description="Phosphothreonine" evidence="6">
    <location>
        <position position="77"/>
    </location>
</feature>
<feature type="modified residue" description="Phosphothreonine" evidence="5">
    <location>
        <position position="270"/>
    </location>
</feature>
<reference key="1">
    <citation type="journal article" date="1984" name="J. Bacteriol.">
        <title>Nucleotide sequence of the Saccharomyces cerevisiae arginase gene (CAR1) and its transcription under various physiological conditions.</title>
        <authorList>
            <person name="Sumrada R.A."/>
            <person name="Cooper T.G."/>
        </authorList>
    </citation>
    <scope>NUCLEOTIDE SEQUENCE [GENOMIC DNA]</scope>
</reference>
<reference key="2">
    <citation type="journal article" date="1997" name="Nature">
        <title>The nucleotide sequence of Saccharomyces cerevisiae chromosome XVI.</title>
        <authorList>
            <person name="Bussey H."/>
            <person name="Storms R.K."/>
            <person name="Ahmed A."/>
            <person name="Albermann K."/>
            <person name="Allen E."/>
            <person name="Ansorge W."/>
            <person name="Araujo R."/>
            <person name="Aparicio A."/>
            <person name="Barrell B.G."/>
            <person name="Badcock K."/>
            <person name="Benes V."/>
            <person name="Botstein D."/>
            <person name="Bowman S."/>
            <person name="Brueckner M."/>
            <person name="Carpenter J."/>
            <person name="Cherry J.M."/>
            <person name="Chung E."/>
            <person name="Churcher C.M."/>
            <person name="Coster F."/>
            <person name="Davis K."/>
            <person name="Davis R.W."/>
            <person name="Dietrich F.S."/>
            <person name="Delius H."/>
            <person name="DiPaolo T."/>
            <person name="Dubois E."/>
            <person name="Duesterhoeft A."/>
            <person name="Duncan M."/>
            <person name="Floeth M."/>
            <person name="Fortin N."/>
            <person name="Friesen J.D."/>
            <person name="Fritz C."/>
            <person name="Goffeau A."/>
            <person name="Hall J."/>
            <person name="Hebling U."/>
            <person name="Heumann K."/>
            <person name="Hilbert H."/>
            <person name="Hillier L.W."/>
            <person name="Hunicke-Smith S."/>
            <person name="Hyman R.W."/>
            <person name="Johnston M."/>
            <person name="Kalman S."/>
            <person name="Kleine K."/>
            <person name="Komp C."/>
            <person name="Kurdi O."/>
            <person name="Lashkari D."/>
            <person name="Lew H."/>
            <person name="Lin A."/>
            <person name="Lin D."/>
            <person name="Louis E.J."/>
            <person name="Marathe R."/>
            <person name="Messenguy F."/>
            <person name="Mewes H.-W."/>
            <person name="Mirtipati S."/>
            <person name="Moestl D."/>
            <person name="Mueller-Auer S."/>
            <person name="Namath A."/>
            <person name="Nentwich U."/>
            <person name="Oefner P."/>
            <person name="Pearson D."/>
            <person name="Petel F.X."/>
            <person name="Pohl T.M."/>
            <person name="Purnelle B."/>
            <person name="Rajandream M.A."/>
            <person name="Rechmann S."/>
            <person name="Rieger M."/>
            <person name="Riles L."/>
            <person name="Roberts D."/>
            <person name="Schaefer M."/>
            <person name="Scharfe M."/>
            <person name="Scherens B."/>
            <person name="Schramm S."/>
            <person name="Schroeder M."/>
            <person name="Sdicu A.-M."/>
            <person name="Tettelin H."/>
            <person name="Urrestarazu L.A."/>
            <person name="Ushinsky S."/>
            <person name="Vierendeels F."/>
            <person name="Vissers S."/>
            <person name="Voss H."/>
            <person name="Walsh S.V."/>
            <person name="Wambutt R."/>
            <person name="Wang Y."/>
            <person name="Wedler E."/>
            <person name="Wedler H."/>
            <person name="Winnett E."/>
            <person name="Zhong W.-W."/>
            <person name="Zollner A."/>
            <person name="Vo D.H."/>
            <person name="Hani J."/>
        </authorList>
    </citation>
    <scope>NUCLEOTIDE SEQUENCE [LARGE SCALE GENOMIC DNA]</scope>
    <source>
        <strain>ATCC 204508 / S288c</strain>
    </source>
</reference>
<reference key="3">
    <citation type="journal article" date="2014" name="G3 (Bethesda)">
        <title>The reference genome sequence of Saccharomyces cerevisiae: Then and now.</title>
        <authorList>
            <person name="Engel S.R."/>
            <person name="Dietrich F.S."/>
            <person name="Fisk D.G."/>
            <person name="Binkley G."/>
            <person name="Balakrishnan R."/>
            <person name="Costanzo M.C."/>
            <person name="Dwight S.S."/>
            <person name="Hitz B.C."/>
            <person name="Karra K."/>
            <person name="Nash R.S."/>
            <person name="Weng S."/>
            <person name="Wong E.D."/>
            <person name="Lloyd P."/>
            <person name="Skrzypek M.S."/>
            <person name="Miyasato S.R."/>
            <person name="Simison M."/>
            <person name="Cherry J.M."/>
        </authorList>
    </citation>
    <scope>GENOME REANNOTATION</scope>
    <source>
        <strain>ATCC 204508 / S288c</strain>
    </source>
</reference>
<reference key="4">
    <citation type="journal article" date="1985" name="Proc. Natl. Acad. Sci. U.S.A.">
        <title>Point mutation generates constitutive expression of an inducible eukaryotic gene.</title>
        <authorList>
            <person name="Sumrada R.A."/>
            <person name="Cooper T.G."/>
        </authorList>
    </citation>
    <scope>NUCLEOTIDE SEQUENCE [GENOMIC DNA] OF 1-11</scope>
</reference>
<reference key="5">
    <citation type="journal article" date="1991" name="J. Biol. Chem.">
        <title>Roles of metal ions in the maintenance of the tertiary and quaternary structure of arginase from Saccharomyces cerevisiae.</title>
        <authorList>
            <person name="Green S.M."/>
            <person name="Ginsburg A."/>
            <person name="Lewis M.S."/>
            <person name="Hensley P."/>
        </authorList>
    </citation>
    <scope>METAL-BINDING</scope>
</reference>
<reference key="6">
    <citation type="journal article" date="2003" name="Nature">
        <title>Global analysis of protein expression in yeast.</title>
        <authorList>
            <person name="Ghaemmaghami S."/>
            <person name="Huh W.-K."/>
            <person name="Bower K."/>
            <person name="Howson R.W."/>
            <person name="Belle A."/>
            <person name="Dephoure N."/>
            <person name="O'Shea E.K."/>
            <person name="Weissman J.S."/>
        </authorList>
    </citation>
    <scope>LEVEL OF PROTEIN EXPRESSION [LARGE SCALE ANALYSIS]</scope>
</reference>
<reference key="7">
    <citation type="journal article" date="2008" name="Mol. Cell. Proteomics">
        <title>A multidimensional chromatography technology for in-depth phosphoproteome analysis.</title>
        <authorList>
            <person name="Albuquerque C.P."/>
            <person name="Smolka M.B."/>
            <person name="Payne S.H."/>
            <person name="Bafna V."/>
            <person name="Eng J."/>
            <person name="Zhou H."/>
        </authorList>
    </citation>
    <scope>PHOSPHORYLATION [LARGE SCALE ANALYSIS] AT THR-270</scope>
    <scope>IDENTIFICATION BY MASS SPECTROMETRY [LARGE SCALE ANALYSIS]</scope>
</reference>
<reference key="8">
    <citation type="journal article" date="2009" name="Science">
        <title>Global analysis of Cdk1 substrate phosphorylation sites provides insights into evolution.</title>
        <authorList>
            <person name="Holt L.J."/>
            <person name="Tuch B.B."/>
            <person name="Villen J."/>
            <person name="Johnson A.D."/>
            <person name="Gygi S.P."/>
            <person name="Morgan D.O."/>
        </authorList>
    </citation>
    <scope>PHOSPHORYLATION [LARGE SCALE ANALYSIS] AT SER-16 AND THR-77</scope>
    <scope>IDENTIFICATION BY MASS SPECTROMETRY [LARGE SCALE ANALYSIS]</scope>
</reference>
<reference key="9">
    <citation type="journal article" date="2012" name="Proc. Natl. Acad. Sci. U.S.A.">
        <title>N-terminal acetylome analyses and functional insights of the N-terminal acetyltransferase NatB.</title>
        <authorList>
            <person name="Van Damme P."/>
            <person name="Lasa M."/>
            <person name="Polevoda B."/>
            <person name="Gazquez C."/>
            <person name="Elosegui-Artola A."/>
            <person name="Kim D.S."/>
            <person name="De Juan-Pardo E."/>
            <person name="Demeyer K."/>
            <person name="Hole K."/>
            <person name="Larrea E."/>
            <person name="Timmerman E."/>
            <person name="Prieto J."/>
            <person name="Arnesen T."/>
            <person name="Sherman F."/>
            <person name="Gevaert K."/>
            <person name="Aldabe R."/>
        </authorList>
    </citation>
    <scope>ACETYLATION [LARGE SCALE ANALYSIS] AT MET-1</scope>
    <scope>IDENTIFICATION BY MASS SPECTROMETRY [LARGE SCALE ANALYSIS]</scope>
</reference>
<protein>
    <recommendedName>
        <fullName>Arginase</fullName>
        <ecNumber evidence="1">3.5.3.1</ecNumber>
    </recommendedName>
</protein>
<sequence length="333" mass="35662">METGPHYNYYKNRELSIVLAPFSGGQGKLGVEKGPKYMLKHGLQTSIEDLGWSTELEPSMDEAQFVGKLKMEKDSTTGGSSVMIDGVKAKRADLVGEATKLVYNSVSKVVQANRFPLTLGGDHSIAIGTVSAVLDKYPDAGLLWIDAHADINTIESTPSGNLHGCPVSFLMGLNKDVPHCPESLKWVPGNLSPKKIAYIGLRDVDAGEKKILKDLGIAAFSMYHVDKYGINAVIEMAMKAVHPETNGEGPIMCSYDVDGVDPLYIPATGTPVRGGLTLREGLFLVERLAESGNLIALDVVECNPDLAIHDIHVSNTISAGCAIARCALGETLL</sequence>
<gene>
    <name type="primary">CAR1</name>
    <name type="ordered locus">YPL111W</name>
    <name type="ORF">LPH15W</name>
</gene>
<evidence type="ECO:0000250" key="1">
    <source>
        <dbReference type="UniProtKB" id="P05089"/>
    </source>
</evidence>
<evidence type="ECO:0000250" key="2">
    <source>
        <dbReference type="UniProtKB" id="P53608"/>
    </source>
</evidence>
<evidence type="ECO:0000255" key="3">
    <source>
        <dbReference type="PROSITE-ProRule" id="PRU00742"/>
    </source>
</evidence>
<evidence type="ECO:0000269" key="4">
    <source>
    </source>
</evidence>
<evidence type="ECO:0007744" key="5">
    <source>
    </source>
</evidence>
<evidence type="ECO:0007744" key="6">
    <source>
    </source>
</evidence>
<evidence type="ECO:0007744" key="7">
    <source>
    </source>
</evidence>
<proteinExistence type="evidence at protein level"/>
<dbReference type="EC" id="3.5.3.1" evidence="1"/>
<dbReference type="EMBL" id="M10414">
    <property type="protein sequence ID" value="AAA34470.1"/>
    <property type="molecule type" value="Genomic_DNA"/>
</dbReference>
<dbReference type="EMBL" id="U43503">
    <property type="protein sequence ID" value="AAB68250.1"/>
    <property type="molecule type" value="Genomic_DNA"/>
</dbReference>
<dbReference type="EMBL" id="M10110">
    <property type="protein sequence ID" value="AAA34469.1"/>
    <property type="molecule type" value="Genomic_DNA"/>
</dbReference>
<dbReference type="EMBL" id="BK006949">
    <property type="protein sequence ID" value="DAA11322.1"/>
    <property type="molecule type" value="Genomic_DNA"/>
</dbReference>
<dbReference type="PIR" id="A01008">
    <property type="entry name" value="WZBYR"/>
</dbReference>
<dbReference type="RefSeq" id="NP_015214.1">
    <property type="nucleotide sequence ID" value="NM_001183925.1"/>
</dbReference>
<dbReference type="SMR" id="P00812"/>
<dbReference type="BioGRID" id="36070">
    <property type="interactions" value="77"/>
</dbReference>
<dbReference type="ComplexPortal" id="CPX-1707">
    <property type="entry name" value="Ornithine carbamoyltransferase arginase complex"/>
</dbReference>
<dbReference type="DIP" id="DIP-1224N"/>
<dbReference type="FunCoup" id="P00812">
    <property type="interactions" value="1639"/>
</dbReference>
<dbReference type="IntAct" id="P00812">
    <property type="interactions" value="31"/>
</dbReference>
<dbReference type="MINT" id="P00812"/>
<dbReference type="STRING" id="4932.YPL111W"/>
<dbReference type="MoonProt" id="P00812"/>
<dbReference type="iPTMnet" id="P00812"/>
<dbReference type="PaxDb" id="4932-YPL111W"/>
<dbReference type="PeptideAtlas" id="P00812"/>
<dbReference type="EnsemblFungi" id="YPL111W_mRNA">
    <property type="protein sequence ID" value="YPL111W"/>
    <property type="gene ID" value="YPL111W"/>
</dbReference>
<dbReference type="GeneID" id="855993"/>
<dbReference type="KEGG" id="sce:YPL111W"/>
<dbReference type="AGR" id="SGD:S000006032"/>
<dbReference type="SGD" id="S000006032">
    <property type="gene designation" value="CAR1"/>
</dbReference>
<dbReference type="VEuPathDB" id="FungiDB:YPL111W"/>
<dbReference type="eggNOG" id="KOG2965">
    <property type="taxonomic scope" value="Eukaryota"/>
</dbReference>
<dbReference type="GeneTree" id="ENSGT00950000183195"/>
<dbReference type="HOGENOM" id="CLU_039478_6_1_1"/>
<dbReference type="InParanoid" id="P00812"/>
<dbReference type="OMA" id="YKEFRYA"/>
<dbReference type="OrthoDB" id="9992747at2759"/>
<dbReference type="BioCyc" id="MetaCyc:YPL111W-MONOMER"/>
<dbReference type="BioCyc" id="YEAST:YPL111W-MONOMER"/>
<dbReference type="Reactome" id="R-SCE-6798695">
    <property type="pathway name" value="Neutrophil degranulation"/>
</dbReference>
<dbReference type="Reactome" id="R-SCE-70635">
    <property type="pathway name" value="Urea cycle"/>
</dbReference>
<dbReference type="Reactome" id="R-SCE-9837999">
    <property type="pathway name" value="Mitochondrial protein degradation"/>
</dbReference>
<dbReference type="SABIO-RK" id="P00812"/>
<dbReference type="UniPathway" id="UPA00158">
    <property type="reaction ID" value="UER00270"/>
</dbReference>
<dbReference type="BioGRID-ORCS" id="855993">
    <property type="hits" value="1 hit in 10 CRISPR screens"/>
</dbReference>
<dbReference type="CD-CODE" id="E03F929F">
    <property type="entry name" value="Stress granule"/>
</dbReference>
<dbReference type="PRO" id="PR:P00812"/>
<dbReference type="Proteomes" id="UP000002311">
    <property type="component" value="Chromosome XVI"/>
</dbReference>
<dbReference type="RNAct" id="P00812">
    <property type="molecule type" value="protein"/>
</dbReference>
<dbReference type="GO" id="GO:0005737">
    <property type="term" value="C:cytoplasm"/>
    <property type="evidence" value="ECO:0007005"/>
    <property type="project" value="SGD"/>
</dbReference>
<dbReference type="GO" id="GO:0005829">
    <property type="term" value="C:cytosol"/>
    <property type="evidence" value="ECO:0000314"/>
    <property type="project" value="SGD"/>
</dbReference>
<dbReference type="GO" id="GO:0043332">
    <property type="term" value="C:mating projection tip"/>
    <property type="evidence" value="ECO:0007005"/>
    <property type="project" value="SGD"/>
</dbReference>
<dbReference type="GO" id="GO:0005634">
    <property type="term" value="C:nucleus"/>
    <property type="evidence" value="ECO:0007005"/>
    <property type="project" value="SGD"/>
</dbReference>
<dbReference type="GO" id="GO:1903269">
    <property type="term" value="C:ornithine carbamoyltransferase inhibitor complex"/>
    <property type="evidence" value="ECO:0000353"/>
    <property type="project" value="ComplexPortal"/>
</dbReference>
<dbReference type="GO" id="GO:0004053">
    <property type="term" value="F:arginase activity"/>
    <property type="evidence" value="ECO:0000314"/>
    <property type="project" value="SGD"/>
</dbReference>
<dbReference type="GO" id="GO:0030145">
    <property type="term" value="F:manganese ion binding"/>
    <property type="evidence" value="ECO:0000314"/>
    <property type="project" value="SGD"/>
</dbReference>
<dbReference type="GO" id="GO:0090369">
    <property type="term" value="F:ornithine carbamoyltransferase inhibitor activity"/>
    <property type="evidence" value="ECO:0000314"/>
    <property type="project" value="SGD"/>
</dbReference>
<dbReference type="GO" id="GO:0008270">
    <property type="term" value="F:zinc ion binding"/>
    <property type="evidence" value="ECO:0000314"/>
    <property type="project" value="SGD"/>
</dbReference>
<dbReference type="GO" id="GO:0019547">
    <property type="term" value="P:arginine catabolic process to ornithine"/>
    <property type="evidence" value="ECO:0000314"/>
    <property type="project" value="SGD"/>
</dbReference>
<dbReference type="GO" id="GO:0090368">
    <property type="term" value="P:regulation of ornithine metabolic process"/>
    <property type="evidence" value="ECO:0000314"/>
    <property type="project" value="SGD"/>
</dbReference>
<dbReference type="GO" id="GO:0000050">
    <property type="term" value="P:urea cycle"/>
    <property type="evidence" value="ECO:0007669"/>
    <property type="project" value="UniProtKB-UniPathway"/>
</dbReference>
<dbReference type="CDD" id="cd09989">
    <property type="entry name" value="Arginase"/>
    <property type="match status" value="1"/>
</dbReference>
<dbReference type="FunFam" id="3.40.800.10:FF:000009">
    <property type="entry name" value="Arginase"/>
    <property type="match status" value="1"/>
</dbReference>
<dbReference type="Gene3D" id="3.40.800.10">
    <property type="entry name" value="Ureohydrolase domain"/>
    <property type="match status" value="1"/>
</dbReference>
<dbReference type="InterPro" id="IPR014033">
    <property type="entry name" value="Arginase"/>
</dbReference>
<dbReference type="InterPro" id="IPR006035">
    <property type="entry name" value="Ureohydrolase"/>
</dbReference>
<dbReference type="InterPro" id="IPR023696">
    <property type="entry name" value="Ureohydrolase_dom_sf"/>
</dbReference>
<dbReference type="InterPro" id="IPR020855">
    <property type="entry name" value="Ureohydrolase_Mn_BS"/>
</dbReference>
<dbReference type="NCBIfam" id="TIGR01229">
    <property type="entry name" value="rocF_arginase"/>
    <property type="match status" value="1"/>
</dbReference>
<dbReference type="PANTHER" id="PTHR43782">
    <property type="entry name" value="ARGINASE"/>
    <property type="match status" value="1"/>
</dbReference>
<dbReference type="PANTHER" id="PTHR43782:SF3">
    <property type="entry name" value="ARGINASE"/>
    <property type="match status" value="1"/>
</dbReference>
<dbReference type="Pfam" id="PF00491">
    <property type="entry name" value="Arginase"/>
    <property type="match status" value="1"/>
</dbReference>
<dbReference type="PRINTS" id="PR00116">
    <property type="entry name" value="ARGINASE"/>
</dbReference>
<dbReference type="SUPFAM" id="SSF52768">
    <property type="entry name" value="Arginase/deacetylase"/>
    <property type="match status" value="1"/>
</dbReference>
<dbReference type="PROSITE" id="PS01053">
    <property type="entry name" value="ARGINASE_1"/>
    <property type="match status" value="1"/>
</dbReference>
<dbReference type="PROSITE" id="PS51409">
    <property type="entry name" value="ARGINASE_2"/>
    <property type="match status" value="1"/>
</dbReference>
<comment type="catalytic activity">
    <reaction evidence="1">
        <text>L-arginine + H2O = urea + L-ornithine</text>
        <dbReference type="Rhea" id="RHEA:20569"/>
        <dbReference type="ChEBI" id="CHEBI:15377"/>
        <dbReference type="ChEBI" id="CHEBI:16199"/>
        <dbReference type="ChEBI" id="CHEBI:32682"/>
        <dbReference type="ChEBI" id="CHEBI:46911"/>
        <dbReference type="EC" id="3.5.3.1"/>
    </reaction>
</comment>
<comment type="cofactor">
    <cofactor evidence="3">
        <name>Mn(2+)</name>
        <dbReference type="ChEBI" id="CHEBI:29035"/>
    </cofactor>
    <text evidence="3">Binds 2 manganese ions per subunit.</text>
</comment>
<comment type="pathway">
    <text evidence="1">Nitrogen metabolism; urea cycle; L-ornithine and urea from L-arginine: step 1/1.</text>
</comment>
<comment type="subunit">
    <text>Homotrimer.</text>
</comment>
<comment type="interaction">
    <interactant intactId="EBI-2856">
        <id>P00812</id>
    </interactant>
    <interactant intactId="EBI-12712">
        <id>P05150</id>
        <label>ARG3</label>
    </interactant>
    <organismsDiffer>false</organismsDiffer>
    <experiments>4</experiments>
</comment>
<comment type="induction">
    <text>By arginine or homoarginine.</text>
</comment>
<comment type="miscellaneous">
    <text evidence="4">Present with 42800 molecules/cell in log phase SD medium.</text>
</comment>
<comment type="similarity">
    <text evidence="3">Belongs to the arginase family.</text>
</comment>
<name>ARGI_YEAST</name>
<organism>
    <name type="scientific">Saccharomyces cerevisiae (strain ATCC 204508 / S288c)</name>
    <name type="common">Baker's yeast</name>
    <dbReference type="NCBI Taxonomy" id="559292"/>
    <lineage>
        <taxon>Eukaryota</taxon>
        <taxon>Fungi</taxon>
        <taxon>Dikarya</taxon>
        <taxon>Ascomycota</taxon>
        <taxon>Saccharomycotina</taxon>
        <taxon>Saccharomycetes</taxon>
        <taxon>Saccharomycetales</taxon>
        <taxon>Saccharomycetaceae</taxon>
        <taxon>Saccharomyces</taxon>
    </lineage>
</organism>
<accession>P00812</accession>
<accession>D6W3Q6</accession>